<feature type="chain" id="PRO_0000378299" description="Protein ImuB">
    <location>
        <begin position="1"/>
        <end position="458"/>
    </location>
</feature>
<accession>B8H428</accession>
<reference key="1">
    <citation type="journal article" date="2010" name="J. Bacteriol.">
        <title>The genetic basis of laboratory adaptation in Caulobacter crescentus.</title>
        <authorList>
            <person name="Marks M.E."/>
            <person name="Castro-Rojas C.M."/>
            <person name="Teiling C."/>
            <person name="Du L."/>
            <person name="Kapatral V."/>
            <person name="Walunas T.L."/>
            <person name="Crosson S."/>
        </authorList>
    </citation>
    <scope>NUCLEOTIDE SEQUENCE [LARGE SCALE GENOMIC DNA]</scope>
    <source>
        <strain>NA1000 / CB15N</strain>
    </source>
</reference>
<reference key="2">
    <citation type="journal article" date="2005" name="Nucleic Acids Res.">
        <title>An SOS-regulated operon involved in damage-inducible mutagenesis in Caulobacter crescentus.</title>
        <authorList>
            <person name="Galhardo R.S."/>
            <person name="Rocha R.P."/>
            <person name="Marques M.V."/>
            <person name="Menck C.F.M."/>
        </authorList>
    </citation>
    <scope>FUNCTION</scope>
</reference>
<sequence>MGLFPGQKAADALALVPDLVTADHDPAADRAALEALCDWCVRFSPAVAIDGDDGLFLDITGTDHLWGGEAAMLVDLVSRLARWGVPARAAIADTAGAAWALARFGPDLAIAPPGEQTAAIATLPVAALRLGDAAEAQLPRLGLHRVGQVLALPRAQLAKRFGLAAVLRLDQALGAASEALTFRRPASPWFDRLAFFEPISAPEDLARVAADALALICARLEAEGRGAKRFEVVFHRLDGRAFPVRVGLARIGRDAQRLARLVKPKLDMVDPGFGIEVVTVHAFAVEPMAAAQARLDADAAASADETLAPLIDRLVNRLGENRVWRADPFESHVPERSVVRVGPLDPPPAARWDPDRPRPVRLFKRPEAIVAIAAELPDYPPRLFTWRGRSHRVRRAEGPERIGQEWWRVGVEKGQTGPGKIRDYYRVEDDTGGRFWIFRQGLYGGEDAPKWWIHGLFG</sequence>
<keyword id="KW-0227">DNA damage</keyword>
<keyword id="KW-0234">DNA repair</keyword>
<keyword id="KW-1185">Reference proteome</keyword>
<organism>
    <name type="scientific">Caulobacter vibrioides (strain NA1000 / CB15N)</name>
    <name type="common">Caulobacter crescentus</name>
    <dbReference type="NCBI Taxonomy" id="565050"/>
    <lineage>
        <taxon>Bacteria</taxon>
        <taxon>Pseudomonadati</taxon>
        <taxon>Pseudomonadota</taxon>
        <taxon>Alphaproteobacteria</taxon>
        <taxon>Caulobacterales</taxon>
        <taxon>Caulobacteraceae</taxon>
        <taxon>Caulobacter</taxon>
    </lineage>
</organism>
<gene>
    <name type="primary">imuB</name>
    <name type="ordered locus">CCNA_03318</name>
</gene>
<comment type="function">
    <text evidence="1">Along with DnaE2 and ImuA is required for the error-prone processing of DNA lesions.</text>
</comment>
<comment type="induction">
    <text>Up-regulated in response to DNA damage in a RecA-dependent manner.</text>
</comment>
<protein>
    <recommendedName>
        <fullName>Protein ImuB</fullName>
    </recommendedName>
</protein>
<dbReference type="EMBL" id="CP001340">
    <property type="protein sequence ID" value="ACL96782.1"/>
    <property type="molecule type" value="Genomic_DNA"/>
</dbReference>
<dbReference type="RefSeq" id="WP_010921045.1">
    <property type="nucleotide sequence ID" value="NC_011916.1"/>
</dbReference>
<dbReference type="RefSeq" id="YP_002518690.1">
    <property type="nucleotide sequence ID" value="NC_011916.1"/>
</dbReference>
<dbReference type="SMR" id="B8H428"/>
<dbReference type="GeneID" id="7330341"/>
<dbReference type="KEGG" id="ccs:CCNA_03318"/>
<dbReference type="PATRIC" id="fig|565050.3.peg.3235"/>
<dbReference type="HOGENOM" id="CLU_028184_1_1_5"/>
<dbReference type="OrthoDB" id="9788640at2"/>
<dbReference type="PhylomeDB" id="B8H428"/>
<dbReference type="Proteomes" id="UP000001364">
    <property type="component" value="Chromosome"/>
</dbReference>
<dbReference type="GO" id="GO:0006281">
    <property type="term" value="P:DNA repair"/>
    <property type="evidence" value="ECO:0007669"/>
    <property type="project" value="UniProtKB-KW"/>
</dbReference>
<dbReference type="CDD" id="cd03468">
    <property type="entry name" value="PolY_like"/>
    <property type="match status" value="1"/>
</dbReference>
<dbReference type="InterPro" id="IPR043502">
    <property type="entry name" value="DNA/RNA_pol_sf"/>
</dbReference>
<dbReference type="InterPro" id="IPR050356">
    <property type="entry name" value="SulA_CellDiv_inhibitor"/>
</dbReference>
<dbReference type="InterPro" id="IPR001126">
    <property type="entry name" value="UmuC"/>
</dbReference>
<dbReference type="PANTHER" id="PTHR35369:SF2">
    <property type="entry name" value="BLR3025 PROTEIN"/>
    <property type="match status" value="1"/>
</dbReference>
<dbReference type="PANTHER" id="PTHR35369">
    <property type="entry name" value="BLR3025 PROTEIN-RELATED"/>
    <property type="match status" value="1"/>
</dbReference>
<dbReference type="Pfam" id="PF00817">
    <property type="entry name" value="IMS"/>
    <property type="match status" value="1"/>
</dbReference>
<dbReference type="SUPFAM" id="SSF56672">
    <property type="entry name" value="DNA/RNA polymerases"/>
    <property type="match status" value="1"/>
</dbReference>
<name>IMUB_CAUVN</name>
<evidence type="ECO:0000269" key="1">
    <source>
    </source>
</evidence>
<proteinExistence type="evidence at transcript level"/>